<name>RBSKI_FRUSL</name>
<proteinExistence type="evidence at protein level"/>
<protein>
    <recommendedName>
        <fullName evidence="4">Bifunctional ribokinase/ribose-5-phosphate isomerase A</fullName>
    </recommendedName>
    <domain>
        <recommendedName>
            <fullName evidence="2">Ribokinase</fullName>
            <ecNumber evidence="2">2.7.1.15</ecNumber>
        </recommendedName>
    </domain>
    <domain>
        <recommendedName>
            <fullName evidence="1">Ribose-5-phosphate isomerase A</fullName>
            <ecNumber evidence="1">5.3.1.6</ecNumber>
        </recommendedName>
        <alternativeName>
            <fullName>Phosphoriboisomerase A</fullName>
            <shortName>PRI</shortName>
        </alternativeName>
    </domain>
</protein>
<sequence>MKKIIVVGSTNVDKVLNVEKYALPGETLAINTYQQSHGGGKGANQAIAAARSGADTTFITKLGNDEDAKMMVKGFKADGMNIDDVITTTDQETGKAYITVDKSGQNSIYVYGGANMAMTPTDVDAHKSAIINADRVIAQLEIPVPAVIEAFKIAKEHGVQTILNPAPAKELPEELLKLTDIITPNESEAATLTGIEVKDETSMLANAKFFFERGIKMVIITVGGRGSFFATPDDHALIPPFPAKVVDTTAAGDTFIGSLASQLEIDLSNIRKAMLYASHASSLTIQVAGAQNSIPTREAILNVINQDQMTKTEIEKQKAQAAAYAAKLVPDHIVLGLGSGTTAAYFVKAINQRINDEHLDIQCVATSVGTEKLAEKLGMRMLDVNTIDQVDLTVDGADVVDHQLNGIKGGGAALLFEKLVADMSKQNIWIVDQSKYTDSLAGHILTIEVIPFGGMGVFRYLKENGYQPEFRFKDNGDILETDSGNYLINIIIPKDADLEKLSIDLKKQTGVVEHGLFLNVCDELIIGGDQIKTIKRSDLS</sequence>
<reference key="1">
    <citation type="journal article" date="2015" name="Nat. Commun.">
        <title>Expanding the biotechnology potential of lactobacilli through comparative genomics of 213 strains and associated genera.</title>
        <authorList>
            <person name="Sun Z."/>
            <person name="Harris H.M."/>
            <person name="McCann A."/>
            <person name="Guo C."/>
            <person name="Argimon S."/>
            <person name="Zhang W."/>
            <person name="Yang X."/>
            <person name="Jeffery I.B."/>
            <person name="Cooney J.C."/>
            <person name="Kagawa T.F."/>
            <person name="Liu W."/>
            <person name="Song Y."/>
            <person name="Salvetti E."/>
            <person name="Wrobel A."/>
            <person name="Rasinkangas P."/>
            <person name="Parkhill J."/>
            <person name="Rea M.C."/>
            <person name="O'Sullivan O."/>
            <person name="Ritari J."/>
            <person name="Douillard F.P."/>
            <person name="Paul Ross R."/>
            <person name="Yang R."/>
            <person name="Briner A.E."/>
            <person name="Felis G.E."/>
            <person name="de Vos W.M."/>
            <person name="Barrangou R."/>
            <person name="Klaenhammer T.R."/>
            <person name="Caufield P.W."/>
            <person name="Cui Y."/>
            <person name="Zhang H."/>
            <person name="O'Toole P.W."/>
        </authorList>
    </citation>
    <scope>NUCLEOTIDE SEQUENCE [LARGE SCALE GENOMIC DNA]</scope>
    <source>
        <strain>ATCC 27651 / DSM 20451 / JCM 5668 / CCUG 30143 / KCTC 3205 / NCIMB 702811 / NRRL B-3934 / L-12</strain>
    </source>
</reference>
<reference key="2">
    <citation type="journal article" date="2002" name="Proteomics">
        <title>High pressure effects step-wise altered protein expression in Lactobacillus sanfranciscensis.</title>
        <authorList>
            <person name="Drews O."/>
            <person name="Weiss W."/>
            <person name="Reil G."/>
            <person name="Parlar H."/>
            <person name="Wait R."/>
            <person name="Goerg A."/>
        </authorList>
    </citation>
    <scope>PROTEIN SEQUENCE OF 245-267</scope>
    <scope>INDUCTION</scope>
    <source>
        <strain>ATCC 27651 / DSM 20451 / JCM 5668 / CCUG 30143 / KCTC 3205 / NCIMB 702811 / NRRL B-3934 / L-12</strain>
    </source>
</reference>
<comment type="function">
    <text evidence="1">Bifunctional enzyme that catalyzes the phosphorylation of ribose at O-5 in a reaction requiring ATP and magnesium, and the reversible conversion of ribose 5-phosphate to ribulose 5-phosphate.</text>
</comment>
<comment type="catalytic activity">
    <reaction evidence="2">
        <text>D-ribose + ATP = D-ribose 5-phosphate + ADP + H(+)</text>
        <dbReference type="Rhea" id="RHEA:13697"/>
        <dbReference type="ChEBI" id="CHEBI:15378"/>
        <dbReference type="ChEBI" id="CHEBI:30616"/>
        <dbReference type="ChEBI" id="CHEBI:47013"/>
        <dbReference type="ChEBI" id="CHEBI:78346"/>
        <dbReference type="ChEBI" id="CHEBI:456216"/>
        <dbReference type="EC" id="2.7.1.15"/>
    </reaction>
</comment>
<comment type="catalytic activity">
    <reaction evidence="1">
        <text>aldehydo-D-ribose 5-phosphate = D-ribulose 5-phosphate</text>
        <dbReference type="Rhea" id="RHEA:14657"/>
        <dbReference type="ChEBI" id="CHEBI:58121"/>
        <dbReference type="ChEBI" id="CHEBI:58273"/>
        <dbReference type="EC" id="5.3.1.6"/>
    </reaction>
</comment>
<comment type="cofactor">
    <cofactor evidence="2">
        <name>Mg(2+)</name>
        <dbReference type="ChEBI" id="CHEBI:18420"/>
    </cofactor>
    <text evidence="2">Requires a divalent cation, most likely magnesium in vivo, as an electrophilic catalyst to aid phosphoryl group transfer. It is the chelate of the metal and the nucleotide that is the actual substrate.</text>
</comment>
<comment type="activity regulation">
    <text evidence="2">Activated by a monovalent cation that binds near, but not in, the active site. The most likely occupant of the site in vivo is potassium. Also activated by ammonium ion. Ion binding induces a conformational change that may alter substrate affinity.</text>
</comment>
<comment type="pathway">
    <text evidence="2">Carbohydrate metabolism; D-ribose degradation; D-ribose 5-phosphate from beta-D-ribopyranose: step 2/2.</text>
</comment>
<comment type="pathway">
    <text evidence="1">Carbohydrate degradation; pentose phosphate pathway; D-ribose 5-phosphate from D-ribulose 5-phosphate (non-oxidative stage): step 1/1.</text>
</comment>
<comment type="subcellular location">
    <subcellularLocation>
        <location evidence="2">Cytoplasm</location>
    </subcellularLocation>
</comment>
<comment type="induction">
    <text evidence="3">By elevated hydrostatic pressure.</text>
</comment>
<comment type="similarity">
    <text evidence="4">In the N-terminal section; belongs to the carbohydrate kinase PfkB family. Ribokinase subfamily.</text>
</comment>
<comment type="similarity">
    <text evidence="4">In the C-terminal section; belongs to the ribose 5-phosphate isomerase family.</text>
</comment>
<evidence type="ECO:0000250" key="1">
    <source>
        <dbReference type="UniProtKB" id="P0A7Z0"/>
    </source>
</evidence>
<evidence type="ECO:0000250" key="2">
    <source>
        <dbReference type="UniProtKB" id="P0A9J6"/>
    </source>
</evidence>
<evidence type="ECO:0000269" key="3">
    <source>
    </source>
</evidence>
<evidence type="ECO:0000305" key="4"/>
<accession>P83534</accession>
<accession>A0A0R2BNR0</accession>
<keyword id="KW-0067">ATP-binding</keyword>
<keyword id="KW-0119">Carbohydrate metabolism</keyword>
<keyword id="KW-0963">Cytoplasm</keyword>
<keyword id="KW-0903">Direct protein sequencing</keyword>
<keyword id="KW-0413">Isomerase</keyword>
<keyword id="KW-0418">Kinase</keyword>
<keyword id="KW-0460">Magnesium</keyword>
<keyword id="KW-0479">Metal-binding</keyword>
<keyword id="KW-0547">Nucleotide-binding</keyword>
<keyword id="KW-0630">Potassium</keyword>
<keyword id="KW-0808">Transferase</keyword>
<feature type="chain" id="PRO_0000285983" description="Bifunctional ribokinase/ribose-5-phosphate isomerase A">
    <location>
        <begin position="1"/>
        <end position="540"/>
    </location>
</feature>
<feature type="region of interest" description="Ribokinase">
    <location>
        <begin position="1"/>
        <end position="308"/>
    </location>
</feature>
<feature type="region of interest" description="Ribose-5-phosphate isomerase A">
    <location>
        <begin position="309"/>
        <end position="540"/>
    </location>
</feature>
<feature type="active site" description="Proton acceptor; for ribokinase activity" evidence="2">
    <location>
        <position position="253"/>
    </location>
</feature>
<feature type="active site" description="Proton acceptor; for ribose-5-phosphate isomerase activity" evidence="1">
    <location>
        <position position="417"/>
    </location>
</feature>
<feature type="binding site" evidence="2">
    <location>
        <begin position="11"/>
        <end position="13"/>
    </location>
    <ligand>
        <name>substrate</name>
        <note>for ribokinase activity</note>
    </ligand>
</feature>
<feature type="binding site" evidence="2">
    <location>
        <begin position="39"/>
        <end position="44"/>
    </location>
    <ligand>
        <name>substrate</name>
        <note>for ribokinase activity</note>
    </ligand>
</feature>
<feature type="binding site" evidence="2">
    <location>
        <position position="141"/>
    </location>
    <ligand>
        <name>substrate</name>
        <note>for ribokinase activity</note>
    </ligand>
</feature>
<feature type="binding site" evidence="2">
    <location>
        <position position="185"/>
    </location>
    <ligand>
        <name>ATP</name>
        <dbReference type="ChEBI" id="CHEBI:30616"/>
    </ligand>
</feature>
<feature type="binding site" evidence="2">
    <location>
        <begin position="221"/>
        <end position="226"/>
    </location>
    <ligand>
        <name>ATP</name>
        <dbReference type="ChEBI" id="CHEBI:30616"/>
    </ligand>
</feature>
<feature type="binding site" evidence="2">
    <location>
        <position position="247"/>
    </location>
    <ligand>
        <name>K(+)</name>
        <dbReference type="ChEBI" id="CHEBI:29103"/>
    </ligand>
</feature>
<feature type="binding site" evidence="2">
    <location>
        <position position="249"/>
    </location>
    <ligand>
        <name>K(+)</name>
        <dbReference type="ChEBI" id="CHEBI:29103"/>
    </ligand>
</feature>
<feature type="binding site" evidence="2">
    <location>
        <begin position="252"/>
        <end position="253"/>
    </location>
    <ligand>
        <name>ATP</name>
        <dbReference type="ChEBI" id="CHEBI:30616"/>
    </ligand>
</feature>
<feature type="binding site" evidence="2">
    <location>
        <position position="253"/>
    </location>
    <ligand>
        <name>substrate</name>
        <label>1</label>
        <note>for ribokinase activity</note>
    </ligand>
</feature>
<feature type="binding site" evidence="2">
    <location>
        <position position="284"/>
    </location>
    <ligand>
        <name>K(+)</name>
        <dbReference type="ChEBI" id="CHEBI:29103"/>
    </ligand>
</feature>
<feature type="binding site" evidence="2">
    <location>
        <position position="287"/>
    </location>
    <ligand>
        <name>K(+)</name>
        <dbReference type="ChEBI" id="CHEBI:29103"/>
    </ligand>
</feature>
<feature type="binding site" evidence="2">
    <location>
        <position position="289"/>
    </location>
    <ligand>
        <name>K(+)</name>
        <dbReference type="ChEBI" id="CHEBI:29103"/>
    </ligand>
</feature>
<feature type="binding site" evidence="2">
    <location>
        <position position="293"/>
    </location>
    <ligand>
        <name>K(+)</name>
        <dbReference type="ChEBI" id="CHEBI:29103"/>
    </ligand>
</feature>
<feature type="binding site" evidence="1">
    <location>
        <begin position="339"/>
        <end position="342"/>
    </location>
    <ligand>
        <name>substrate</name>
        <label>2</label>
        <note>for ribose-5-phosphate isomerase activity</note>
    </ligand>
</feature>
<feature type="binding site" evidence="1">
    <location>
        <begin position="395"/>
        <end position="398"/>
    </location>
    <ligand>
        <name>substrate</name>
        <label>2</label>
        <note>for ribose-5-phosphate isomerase activity</note>
    </ligand>
</feature>
<feature type="binding site" evidence="1">
    <location>
        <begin position="408"/>
        <end position="411"/>
    </location>
    <ligand>
        <name>substrate</name>
        <label>2</label>
        <note>for ribose-5-phosphate isomerase activity</note>
    </ligand>
</feature>
<feature type="binding site" evidence="1">
    <location>
        <position position="435"/>
    </location>
    <ligand>
        <name>substrate</name>
        <label>2</label>
        <note>for ribose-5-phosphate isomerase activity</note>
    </ligand>
</feature>
<feature type="sequence conflict" description="In Ref. 2; AA sequence." evidence="4" ref="2">
    <original>I</original>
    <variation>L</variation>
    <location>
        <position position="256"/>
    </location>
</feature>
<feature type="sequence conflict" description="In Ref. 2; AA sequence." evidence="4" ref="2">
    <original>Q</original>
    <variation>K</variation>
    <location>
        <position position="262"/>
    </location>
</feature>
<feature type="sequence conflict" description="In Ref. 2; AA sequence." evidence="4" ref="2">
    <original>I</original>
    <variation>L</variation>
    <location>
        <position position="265"/>
    </location>
</feature>
<feature type="sequence conflict" description="In Ref. 2; AA sequence." evidence="4" ref="2">
    <original>L</original>
    <variation>E</variation>
    <location>
        <position position="267"/>
    </location>
</feature>
<dbReference type="EC" id="2.7.1.15" evidence="2"/>
<dbReference type="EC" id="5.3.1.6" evidence="1"/>
<dbReference type="EMBL" id="AYYM01000003">
    <property type="protein sequence ID" value="KRM80848.1"/>
    <property type="molecule type" value="Genomic_DNA"/>
</dbReference>
<dbReference type="RefSeq" id="WP_056957679.1">
    <property type="nucleotide sequence ID" value="NZ_AYYM01000003.1"/>
</dbReference>
<dbReference type="SMR" id="P83534"/>
<dbReference type="PATRIC" id="fig|1423800.3.peg.750"/>
<dbReference type="UniPathway" id="UPA00115">
    <property type="reaction ID" value="UER00412"/>
</dbReference>
<dbReference type="UniPathway" id="UPA00916">
    <property type="reaction ID" value="UER00889"/>
</dbReference>
<dbReference type="GO" id="GO:0005829">
    <property type="term" value="C:cytosol"/>
    <property type="evidence" value="ECO:0007669"/>
    <property type="project" value="TreeGrafter"/>
</dbReference>
<dbReference type="GO" id="GO:0005524">
    <property type="term" value="F:ATP binding"/>
    <property type="evidence" value="ECO:0007669"/>
    <property type="project" value="UniProtKB-UniRule"/>
</dbReference>
<dbReference type="GO" id="GO:0046872">
    <property type="term" value="F:metal ion binding"/>
    <property type="evidence" value="ECO:0007669"/>
    <property type="project" value="UniProtKB-KW"/>
</dbReference>
<dbReference type="GO" id="GO:0004747">
    <property type="term" value="F:ribokinase activity"/>
    <property type="evidence" value="ECO:0007669"/>
    <property type="project" value="UniProtKB-UniRule"/>
</dbReference>
<dbReference type="GO" id="GO:0004751">
    <property type="term" value="F:ribose-5-phosphate isomerase activity"/>
    <property type="evidence" value="ECO:0007669"/>
    <property type="project" value="UniProtKB-EC"/>
</dbReference>
<dbReference type="GO" id="GO:0019303">
    <property type="term" value="P:D-ribose catabolic process"/>
    <property type="evidence" value="ECO:0007669"/>
    <property type="project" value="UniProtKB-UniRule"/>
</dbReference>
<dbReference type="GO" id="GO:0009052">
    <property type="term" value="P:pentose-phosphate shunt, non-oxidative branch"/>
    <property type="evidence" value="ECO:0007669"/>
    <property type="project" value="InterPro"/>
</dbReference>
<dbReference type="CDD" id="cd01174">
    <property type="entry name" value="ribokinase"/>
    <property type="match status" value="1"/>
</dbReference>
<dbReference type="CDD" id="cd01398">
    <property type="entry name" value="RPI_A"/>
    <property type="match status" value="1"/>
</dbReference>
<dbReference type="FunFam" id="3.40.50.1360:FF:000001">
    <property type="entry name" value="Ribose-5-phosphate isomerase A"/>
    <property type="match status" value="1"/>
</dbReference>
<dbReference type="Gene3D" id="3.30.70.260">
    <property type="match status" value="1"/>
</dbReference>
<dbReference type="Gene3D" id="3.40.1190.20">
    <property type="match status" value="1"/>
</dbReference>
<dbReference type="Gene3D" id="3.40.50.1360">
    <property type="match status" value="1"/>
</dbReference>
<dbReference type="HAMAP" id="MF_01987">
    <property type="entry name" value="Ribokinase"/>
    <property type="match status" value="1"/>
</dbReference>
<dbReference type="InterPro" id="IPR037171">
    <property type="entry name" value="NagB/RpiA_transferase-like"/>
</dbReference>
<dbReference type="InterPro" id="IPR011611">
    <property type="entry name" value="PfkB_dom"/>
</dbReference>
<dbReference type="InterPro" id="IPR002139">
    <property type="entry name" value="Ribo/fructo_kinase"/>
</dbReference>
<dbReference type="InterPro" id="IPR011877">
    <property type="entry name" value="Ribokinase"/>
</dbReference>
<dbReference type="InterPro" id="IPR029056">
    <property type="entry name" value="Ribokinase-like"/>
</dbReference>
<dbReference type="InterPro" id="IPR004788">
    <property type="entry name" value="Ribose5P_isomerase_type_A"/>
</dbReference>
<dbReference type="NCBIfam" id="TIGR02152">
    <property type="entry name" value="D_ribokin_bact"/>
    <property type="match status" value="1"/>
</dbReference>
<dbReference type="NCBIfam" id="NF001924">
    <property type="entry name" value="PRK00702.1"/>
    <property type="match status" value="1"/>
</dbReference>
<dbReference type="NCBIfam" id="TIGR00021">
    <property type="entry name" value="rpiA"/>
    <property type="match status" value="1"/>
</dbReference>
<dbReference type="PANTHER" id="PTHR10584:SF166">
    <property type="entry name" value="RIBOKINASE"/>
    <property type="match status" value="1"/>
</dbReference>
<dbReference type="PANTHER" id="PTHR10584">
    <property type="entry name" value="SUGAR KINASE"/>
    <property type="match status" value="1"/>
</dbReference>
<dbReference type="Pfam" id="PF00294">
    <property type="entry name" value="PfkB"/>
    <property type="match status" value="1"/>
</dbReference>
<dbReference type="Pfam" id="PF06026">
    <property type="entry name" value="Rib_5-P_isom_A"/>
    <property type="match status" value="1"/>
</dbReference>
<dbReference type="PRINTS" id="PR00990">
    <property type="entry name" value="RIBOKINASE"/>
</dbReference>
<dbReference type="SUPFAM" id="SSF75445">
    <property type="entry name" value="D-ribose-5-phosphate isomerase (RpiA), lid domain"/>
    <property type="match status" value="1"/>
</dbReference>
<dbReference type="SUPFAM" id="SSF100950">
    <property type="entry name" value="NagB/RpiA/CoA transferase-like"/>
    <property type="match status" value="1"/>
</dbReference>
<dbReference type="SUPFAM" id="SSF53613">
    <property type="entry name" value="Ribokinase-like"/>
    <property type="match status" value="1"/>
</dbReference>
<organism>
    <name type="scientific">Fructilactobacillus sanfranciscensis (strain ATCC 27651 / DSM 20451 / JCM 5668 / CCUG 30143 / KCTC 3205 / NCIMB 702811 / NRRL B-3934 / L-12)</name>
    <name type="common">Lactobacillus sanfranciscensis</name>
    <dbReference type="NCBI Taxonomy" id="1423800"/>
    <lineage>
        <taxon>Bacteria</taxon>
        <taxon>Bacillati</taxon>
        <taxon>Bacillota</taxon>
        <taxon>Bacilli</taxon>
        <taxon>Lactobacillales</taxon>
        <taxon>Lactobacillaceae</taxon>
        <taxon>Fructilactobacillus</taxon>
    </lineage>
</organism>
<gene>
    <name type="primary">rbsK/rbiA</name>
    <name type="ORF">FD36_GL000739</name>
</gene>